<proteinExistence type="inferred from homology"/>
<comment type="function">
    <text evidence="1">Involved in protein export. Acts as a chaperone by maintaining the newly synthesized protein in an open conformation. Functions as a peptidyl-prolyl cis-trans isomerase.</text>
</comment>
<comment type="catalytic activity">
    <reaction evidence="1">
        <text>[protein]-peptidylproline (omega=180) = [protein]-peptidylproline (omega=0)</text>
        <dbReference type="Rhea" id="RHEA:16237"/>
        <dbReference type="Rhea" id="RHEA-COMP:10747"/>
        <dbReference type="Rhea" id="RHEA-COMP:10748"/>
        <dbReference type="ChEBI" id="CHEBI:83833"/>
        <dbReference type="ChEBI" id="CHEBI:83834"/>
        <dbReference type="EC" id="5.2.1.8"/>
    </reaction>
</comment>
<comment type="subcellular location">
    <subcellularLocation>
        <location>Cytoplasm</location>
    </subcellularLocation>
    <text evidence="1">About half TF is bound to the ribosome near the polypeptide exit tunnel while the other half is free in the cytoplasm.</text>
</comment>
<comment type="domain">
    <text evidence="1">Consists of 3 domains; the N-terminus binds the ribosome, the middle domain has PPIase activity, while the C-terminus has intrinsic chaperone activity on its own.</text>
</comment>
<comment type="similarity">
    <text evidence="1">Belongs to the FKBP-type PPIase family. Tig subfamily.</text>
</comment>
<feature type="chain" id="PRO_1000079046" description="Trigger factor">
    <location>
        <begin position="1"/>
        <end position="464"/>
    </location>
</feature>
<feature type="domain" description="PPIase FKBP-type" evidence="1">
    <location>
        <begin position="169"/>
        <end position="256"/>
    </location>
</feature>
<accession>B0JL93</accession>
<name>TIG_MICAN</name>
<dbReference type="EC" id="5.2.1.8" evidence="1"/>
<dbReference type="EMBL" id="AP009552">
    <property type="protein sequence ID" value="BAG06092.1"/>
    <property type="molecule type" value="Genomic_DNA"/>
</dbReference>
<dbReference type="RefSeq" id="WP_012268369.1">
    <property type="nucleotide sequence ID" value="NC_010296.1"/>
</dbReference>
<dbReference type="SMR" id="B0JL93"/>
<dbReference type="STRING" id="449447.MAE_62700"/>
<dbReference type="PaxDb" id="449447-MAE_62700"/>
<dbReference type="EnsemblBacteria" id="BAG06092">
    <property type="protein sequence ID" value="BAG06092"/>
    <property type="gene ID" value="MAE_62700"/>
</dbReference>
<dbReference type="KEGG" id="mar:MAE_62700"/>
<dbReference type="PATRIC" id="fig|449447.4.peg.5745"/>
<dbReference type="eggNOG" id="COG0544">
    <property type="taxonomic scope" value="Bacteria"/>
</dbReference>
<dbReference type="HOGENOM" id="CLU_033058_3_1_3"/>
<dbReference type="BioCyc" id="MAER449447:MAE_RS27410-MONOMER"/>
<dbReference type="Proteomes" id="UP000001510">
    <property type="component" value="Chromosome"/>
</dbReference>
<dbReference type="GO" id="GO:0005737">
    <property type="term" value="C:cytoplasm"/>
    <property type="evidence" value="ECO:0007669"/>
    <property type="project" value="UniProtKB-SubCell"/>
</dbReference>
<dbReference type="GO" id="GO:0003755">
    <property type="term" value="F:peptidyl-prolyl cis-trans isomerase activity"/>
    <property type="evidence" value="ECO:0007669"/>
    <property type="project" value="UniProtKB-UniRule"/>
</dbReference>
<dbReference type="GO" id="GO:0044183">
    <property type="term" value="F:protein folding chaperone"/>
    <property type="evidence" value="ECO:0007669"/>
    <property type="project" value="TreeGrafter"/>
</dbReference>
<dbReference type="GO" id="GO:0043022">
    <property type="term" value="F:ribosome binding"/>
    <property type="evidence" value="ECO:0007669"/>
    <property type="project" value="TreeGrafter"/>
</dbReference>
<dbReference type="GO" id="GO:0051083">
    <property type="term" value="P:'de novo' cotranslational protein folding"/>
    <property type="evidence" value="ECO:0007669"/>
    <property type="project" value="TreeGrafter"/>
</dbReference>
<dbReference type="GO" id="GO:0051301">
    <property type="term" value="P:cell division"/>
    <property type="evidence" value="ECO:0007669"/>
    <property type="project" value="UniProtKB-KW"/>
</dbReference>
<dbReference type="GO" id="GO:0061077">
    <property type="term" value="P:chaperone-mediated protein folding"/>
    <property type="evidence" value="ECO:0007669"/>
    <property type="project" value="TreeGrafter"/>
</dbReference>
<dbReference type="GO" id="GO:0015031">
    <property type="term" value="P:protein transport"/>
    <property type="evidence" value="ECO:0007669"/>
    <property type="project" value="UniProtKB-UniRule"/>
</dbReference>
<dbReference type="GO" id="GO:0043335">
    <property type="term" value="P:protein unfolding"/>
    <property type="evidence" value="ECO:0007669"/>
    <property type="project" value="TreeGrafter"/>
</dbReference>
<dbReference type="FunFam" id="3.30.70.1050:FF:000004">
    <property type="entry name" value="Trigger factor"/>
    <property type="match status" value="1"/>
</dbReference>
<dbReference type="Gene3D" id="3.10.50.40">
    <property type="match status" value="1"/>
</dbReference>
<dbReference type="Gene3D" id="3.30.70.1050">
    <property type="entry name" value="Trigger factor ribosome-binding domain"/>
    <property type="match status" value="1"/>
</dbReference>
<dbReference type="Gene3D" id="1.10.3120.10">
    <property type="entry name" value="Trigger factor, C-terminal domain"/>
    <property type="match status" value="1"/>
</dbReference>
<dbReference type="HAMAP" id="MF_00303">
    <property type="entry name" value="Trigger_factor_Tig"/>
    <property type="match status" value="1"/>
</dbReference>
<dbReference type="InterPro" id="IPR046357">
    <property type="entry name" value="PPIase_dom_sf"/>
</dbReference>
<dbReference type="InterPro" id="IPR001179">
    <property type="entry name" value="PPIase_FKBP_dom"/>
</dbReference>
<dbReference type="InterPro" id="IPR005215">
    <property type="entry name" value="Trig_fac"/>
</dbReference>
<dbReference type="InterPro" id="IPR008880">
    <property type="entry name" value="Trigger_fac_C"/>
</dbReference>
<dbReference type="InterPro" id="IPR037041">
    <property type="entry name" value="Trigger_fac_C_sf"/>
</dbReference>
<dbReference type="InterPro" id="IPR008881">
    <property type="entry name" value="Trigger_fac_ribosome-bd_bac"/>
</dbReference>
<dbReference type="InterPro" id="IPR036611">
    <property type="entry name" value="Trigger_fac_ribosome-bd_sf"/>
</dbReference>
<dbReference type="InterPro" id="IPR027304">
    <property type="entry name" value="Trigger_fact/SurA_dom_sf"/>
</dbReference>
<dbReference type="NCBIfam" id="TIGR00115">
    <property type="entry name" value="tig"/>
    <property type="match status" value="1"/>
</dbReference>
<dbReference type="PANTHER" id="PTHR30560">
    <property type="entry name" value="TRIGGER FACTOR CHAPERONE AND PEPTIDYL-PROLYL CIS/TRANS ISOMERASE"/>
    <property type="match status" value="1"/>
</dbReference>
<dbReference type="PANTHER" id="PTHR30560:SF3">
    <property type="entry name" value="TRIGGER FACTOR-LIKE PROTEIN TIG, CHLOROPLASTIC"/>
    <property type="match status" value="1"/>
</dbReference>
<dbReference type="Pfam" id="PF00254">
    <property type="entry name" value="FKBP_C"/>
    <property type="match status" value="1"/>
</dbReference>
<dbReference type="Pfam" id="PF05698">
    <property type="entry name" value="Trigger_C"/>
    <property type="match status" value="1"/>
</dbReference>
<dbReference type="Pfam" id="PF05697">
    <property type="entry name" value="Trigger_N"/>
    <property type="match status" value="1"/>
</dbReference>
<dbReference type="PIRSF" id="PIRSF003095">
    <property type="entry name" value="Trigger_factor"/>
    <property type="match status" value="1"/>
</dbReference>
<dbReference type="SUPFAM" id="SSF54534">
    <property type="entry name" value="FKBP-like"/>
    <property type="match status" value="1"/>
</dbReference>
<dbReference type="SUPFAM" id="SSF109998">
    <property type="entry name" value="Triger factor/SurA peptide-binding domain-like"/>
    <property type="match status" value="1"/>
</dbReference>
<dbReference type="SUPFAM" id="SSF102735">
    <property type="entry name" value="Trigger factor ribosome-binding domain"/>
    <property type="match status" value="1"/>
</dbReference>
<reference key="1">
    <citation type="journal article" date="2007" name="DNA Res.">
        <title>Complete genomic structure of the bloom-forming toxic cyanobacterium Microcystis aeruginosa NIES-843.</title>
        <authorList>
            <person name="Kaneko T."/>
            <person name="Nakajima N."/>
            <person name="Okamoto S."/>
            <person name="Suzuki I."/>
            <person name="Tanabe Y."/>
            <person name="Tamaoki M."/>
            <person name="Nakamura Y."/>
            <person name="Kasai F."/>
            <person name="Watanabe A."/>
            <person name="Kawashima K."/>
            <person name="Kishida Y."/>
            <person name="Ono A."/>
            <person name="Shimizu Y."/>
            <person name="Takahashi C."/>
            <person name="Minami C."/>
            <person name="Fujishiro T."/>
            <person name="Kohara M."/>
            <person name="Katoh M."/>
            <person name="Nakazaki N."/>
            <person name="Nakayama S."/>
            <person name="Yamada M."/>
            <person name="Tabata S."/>
            <person name="Watanabe M.M."/>
        </authorList>
    </citation>
    <scope>NUCLEOTIDE SEQUENCE [LARGE SCALE GENOMIC DNA]</scope>
    <source>
        <strain>NIES-843 / IAM M-247</strain>
    </source>
</reference>
<evidence type="ECO:0000255" key="1">
    <source>
        <dbReference type="HAMAP-Rule" id="MF_00303"/>
    </source>
</evidence>
<keyword id="KW-0131">Cell cycle</keyword>
<keyword id="KW-0132">Cell division</keyword>
<keyword id="KW-0143">Chaperone</keyword>
<keyword id="KW-0963">Cytoplasm</keyword>
<keyword id="KW-0413">Isomerase</keyword>
<keyword id="KW-0697">Rotamase</keyword>
<organism>
    <name type="scientific">Microcystis aeruginosa (strain NIES-843 / IAM M-2473)</name>
    <dbReference type="NCBI Taxonomy" id="449447"/>
    <lineage>
        <taxon>Bacteria</taxon>
        <taxon>Bacillati</taxon>
        <taxon>Cyanobacteriota</taxon>
        <taxon>Cyanophyceae</taxon>
        <taxon>Oscillatoriophycideae</taxon>
        <taxon>Chroococcales</taxon>
        <taxon>Microcystaceae</taxon>
        <taxon>Microcystis</taxon>
    </lineage>
</organism>
<sequence>MKVIQEKLPASQIGLEIEIPAETTKNTHEQVVKNLAKSVNIPGFRPGKVPRQILLQRLGTKAVKAAVIEELIENCLESALKQEGIESLGNPQLLSKFEDLIAAYEPGKALTFSVSLDVAPTIILGDYENLSVTAEETVYDPESVENWFKERQEQLATLVPVEDRGAQLGDVAIVDYRGKSAETGEDIPDIDGEDLRVDMEAGRFIEGMVEGIIGMKPEEVKEMTLTFPEDYPKEDVAAKAVIFTITMKELKAKELPELDDDFAQEVSDQETIAELRASLEKRFQEQAEKETKESIDDALTKELVKGATLDLPETLIEKEVTHILTQSFMQFQQMGLDVNQLFTKDNIPKMRENARPDAIESLKETLVVQELAKVAGIEVSPEAVAEKIANIMSQLSDRDIDMQRLEQVITEEMLAENTLEWLKEKATITLVPKGSLEEETSEEEETEETLAAAAVEVLAAEEEP</sequence>
<gene>
    <name evidence="1" type="primary">tig</name>
    <name type="ordered locus">MAE_62700</name>
</gene>
<protein>
    <recommendedName>
        <fullName evidence="1">Trigger factor</fullName>
        <shortName evidence="1">TF</shortName>
        <ecNumber evidence="1">5.2.1.8</ecNumber>
    </recommendedName>
    <alternativeName>
        <fullName evidence="1">PPIase</fullName>
    </alternativeName>
</protein>